<name>SYA_EXIS2</name>
<comment type="function">
    <text evidence="1">Catalyzes the attachment of alanine to tRNA(Ala) in a two-step reaction: alanine is first activated by ATP to form Ala-AMP and then transferred to the acceptor end of tRNA(Ala). Also edits incorrectly charged Ser-tRNA(Ala) and Gly-tRNA(Ala) via its editing domain.</text>
</comment>
<comment type="catalytic activity">
    <reaction evidence="1">
        <text>tRNA(Ala) + L-alanine + ATP = L-alanyl-tRNA(Ala) + AMP + diphosphate</text>
        <dbReference type="Rhea" id="RHEA:12540"/>
        <dbReference type="Rhea" id="RHEA-COMP:9657"/>
        <dbReference type="Rhea" id="RHEA-COMP:9923"/>
        <dbReference type="ChEBI" id="CHEBI:30616"/>
        <dbReference type="ChEBI" id="CHEBI:33019"/>
        <dbReference type="ChEBI" id="CHEBI:57972"/>
        <dbReference type="ChEBI" id="CHEBI:78442"/>
        <dbReference type="ChEBI" id="CHEBI:78497"/>
        <dbReference type="ChEBI" id="CHEBI:456215"/>
        <dbReference type="EC" id="6.1.1.7"/>
    </reaction>
</comment>
<comment type="cofactor">
    <cofactor evidence="1">
        <name>Zn(2+)</name>
        <dbReference type="ChEBI" id="CHEBI:29105"/>
    </cofactor>
    <text evidence="1">Binds 1 zinc ion per subunit.</text>
</comment>
<comment type="subcellular location">
    <subcellularLocation>
        <location evidence="1">Cytoplasm</location>
    </subcellularLocation>
</comment>
<comment type="domain">
    <text evidence="1">Consists of three domains; the N-terminal catalytic domain, the editing domain and the C-terminal C-Ala domain. The editing domain removes incorrectly charged amino acids, while the C-Ala domain, along with tRNA(Ala), serves as a bridge to cooperatively bring together the editing and aminoacylation centers thus stimulating deacylation of misacylated tRNAs.</text>
</comment>
<comment type="similarity">
    <text evidence="1">Belongs to the class-II aminoacyl-tRNA synthetase family.</text>
</comment>
<protein>
    <recommendedName>
        <fullName evidence="1">Alanine--tRNA ligase</fullName>
        <ecNumber evidence="1">6.1.1.7</ecNumber>
    </recommendedName>
    <alternativeName>
        <fullName evidence="1">Alanyl-tRNA synthetase</fullName>
        <shortName evidence="1">AlaRS</shortName>
    </alternativeName>
</protein>
<accession>B1YJE5</accession>
<proteinExistence type="inferred from homology"/>
<reference key="1">
    <citation type="submission" date="2008-04" db="EMBL/GenBank/DDBJ databases">
        <title>Complete sequence of chromosome of Exiguobacterium sibiricum 255-15.</title>
        <authorList>
            <consortium name="US DOE Joint Genome Institute"/>
            <person name="Copeland A."/>
            <person name="Lucas S."/>
            <person name="Lapidus A."/>
            <person name="Glavina del Rio T."/>
            <person name="Dalin E."/>
            <person name="Tice H."/>
            <person name="Bruce D."/>
            <person name="Goodwin L."/>
            <person name="Pitluck S."/>
            <person name="Kiss H."/>
            <person name="Chertkov O."/>
            <person name="Monk C."/>
            <person name="Brettin T."/>
            <person name="Detter J.C."/>
            <person name="Han C."/>
            <person name="Kuske C.R."/>
            <person name="Schmutz J."/>
            <person name="Larimer F."/>
            <person name="Land M."/>
            <person name="Hauser L."/>
            <person name="Kyrpides N."/>
            <person name="Mikhailova N."/>
            <person name="Vishnivetskaya T."/>
            <person name="Rodrigues D.F."/>
            <person name="Gilichinsky D."/>
            <person name="Tiedje J."/>
            <person name="Richardson P."/>
        </authorList>
    </citation>
    <scope>NUCLEOTIDE SEQUENCE [LARGE SCALE GENOMIC DNA]</scope>
    <source>
        <strain>DSM 17290 / CCUG 55495 / CIP 109462 / JCM 13490 / 255-15</strain>
    </source>
</reference>
<evidence type="ECO:0000255" key="1">
    <source>
        <dbReference type="HAMAP-Rule" id="MF_00036"/>
    </source>
</evidence>
<feature type="chain" id="PRO_0000347604" description="Alanine--tRNA ligase">
    <location>
        <begin position="1"/>
        <end position="880"/>
    </location>
</feature>
<feature type="binding site" evidence="1">
    <location>
        <position position="568"/>
    </location>
    <ligand>
        <name>Zn(2+)</name>
        <dbReference type="ChEBI" id="CHEBI:29105"/>
    </ligand>
</feature>
<feature type="binding site" evidence="1">
    <location>
        <position position="572"/>
    </location>
    <ligand>
        <name>Zn(2+)</name>
        <dbReference type="ChEBI" id="CHEBI:29105"/>
    </ligand>
</feature>
<feature type="binding site" evidence="1">
    <location>
        <position position="670"/>
    </location>
    <ligand>
        <name>Zn(2+)</name>
        <dbReference type="ChEBI" id="CHEBI:29105"/>
    </ligand>
</feature>
<feature type="binding site" evidence="1">
    <location>
        <position position="674"/>
    </location>
    <ligand>
        <name>Zn(2+)</name>
        <dbReference type="ChEBI" id="CHEBI:29105"/>
    </ligand>
</feature>
<sequence length="880" mass="96701">MKPLKPLTGAQIRQMYLDFFQSKGHAIEPSASLVPIEDPTLLWINSGVATLKKYFDGRVIPQNPRIVNAQKSIRTNDIENVGKTARHHTFFEMLGNFSVGDYFREDAIKWGWELLTSDEWYGLDPDRLSVTIHPEDDAARQIWLELGVPAERIIPLEDNFWEIGEGPSGPNTEIFFDRGPAFGDDPNDSELYPGGENERYLEIWNIVFSQYNHDGHGNYTELPRKNIDTGMGLERMASVMQDVPTNFDTDLFMPIIHKTEEISGKRYREDTKLDVAFKVIADHIRTVAFAIGDGALPSNEGRGYVLRRLLRRAVRYAKMLGIERPFMYELVDTVGSVMVDFYPQVPEKADFIKRVIKNEEERFHETLHDGLAILNTVAQAAKNNGEHIISGEDAFRLYDTYGFPLELTVEYAEDHQMSVDEEGFKRAMDEQRKRARAAREDGGSMQQQSEVLATLTVPSQFVGYTDLEADAKIIALLHDGERVTEVAAGEEAQLLLDVTPFYAESGGEVADSGTITGPDFVLDVKDVQKAPNGQNLHTVVVRTGIALADASVHAAVEASSRQAITKNHTATHLLHKALKDTLGTHVNQAGSLVSAERLRFDFSHFGAVTAEELATIEQDVNQAIWASLAVEIEEMNIADAKAKGAMALFGEKYGETVRVVSAGTYSIELCGGIHVRNTAEIGLFKIVSESGIGAGTRRIEAVTGAGAYHVMNGHLQTLEQAARVLKTKTTEVPGRIEALQVQLRETERAHESLQAKLANIEAASLKDDVEQINGVQVLAKQVDVSDMDALRGMMDELKSSLGSAIIVLGSAQGDKVNLVASVSKDLIDQGYHAGKLIKEVATRCGGGGGGRPDMAQAGGKDPAKLNEALAFTSHYVQSLA</sequence>
<organism>
    <name type="scientific">Exiguobacterium sibiricum (strain DSM 17290 / CCUG 55495 / CIP 109462 / JCM 13490 / 255-15)</name>
    <dbReference type="NCBI Taxonomy" id="262543"/>
    <lineage>
        <taxon>Bacteria</taxon>
        <taxon>Bacillati</taxon>
        <taxon>Bacillota</taxon>
        <taxon>Bacilli</taxon>
        <taxon>Bacillales</taxon>
        <taxon>Bacillales Family XII. Incertae Sedis</taxon>
        <taxon>Exiguobacterium</taxon>
    </lineage>
</organism>
<gene>
    <name evidence="1" type="primary">alaS</name>
    <name type="ordered locus">Exig_2074</name>
</gene>
<dbReference type="EC" id="6.1.1.7" evidence="1"/>
<dbReference type="EMBL" id="CP001022">
    <property type="protein sequence ID" value="ACB61526.1"/>
    <property type="molecule type" value="Genomic_DNA"/>
</dbReference>
<dbReference type="RefSeq" id="WP_012370943.1">
    <property type="nucleotide sequence ID" value="NC_010556.1"/>
</dbReference>
<dbReference type="SMR" id="B1YJE5"/>
<dbReference type="STRING" id="262543.Exig_2074"/>
<dbReference type="KEGG" id="esi:Exig_2074"/>
<dbReference type="eggNOG" id="COG0013">
    <property type="taxonomic scope" value="Bacteria"/>
</dbReference>
<dbReference type="HOGENOM" id="CLU_004485_1_1_9"/>
<dbReference type="OrthoDB" id="9803884at2"/>
<dbReference type="Proteomes" id="UP000001681">
    <property type="component" value="Chromosome"/>
</dbReference>
<dbReference type="GO" id="GO:0005829">
    <property type="term" value="C:cytosol"/>
    <property type="evidence" value="ECO:0007669"/>
    <property type="project" value="TreeGrafter"/>
</dbReference>
<dbReference type="GO" id="GO:0004813">
    <property type="term" value="F:alanine-tRNA ligase activity"/>
    <property type="evidence" value="ECO:0007669"/>
    <property type="project" value="UniProtKB-UniRule"/>
</dbReference>
<dbReference type="GO" id="GO:0002161">
    <property type="term" value="F:aminoacyl-tRNA deacylase activity"/>
    <property type="evidence" value="ECO:0007669"/>
    <property type="project" value="TreeGrafter"/>
</dbReference>
<dbReference type="GO" id="GO:0005524">
    <property type="term" value="F:ATP binding"/>
    <property type="evidence" value="ECO:0007669"/>
    <property type="project" value="UniProtKB-UniRule"/>
</dbReference>
<dbReference type="GO" id="GO:0140096">
    <property type="term" value="F:catalytic activity, acting on a protein"/>
    <property type="evidence" value="ECO:0007669"/>
    <property type="project" value="UniProtKB-ARBA"/>
</dbReference>
<dbReference type="GO" id="GO:0016740">
    <property type="term" value="F:transferase activity"/>
    <property type="evidence" value="ECO:0007669"/>
    <property type="project" value="UniProtKB-ARBA"/>
</dbReference>
<dbReference type="GO" id="GO:0000049">
    <property type="term" value="F:tRNA binding"/>
    <property type="evidence" value="ECO:0007669"/>
    <property type="project" value="UniProtKB-KW"/>
</dbReference>
<dbReference type="GO" id="GO:0008270">
    <property type="term" value="F:zinc ion binding"/>
    <property type="evidence" value="ECO:0007669"/>
    <property type="project" value="UniProtKB-UniRule"/>
</dbReference>
<dbReference type="GO" id="GO:0006419">
    <property type="term" value="P:alanyl-tRNA aminoacylation"/>
    <property type="evidence" value="ECO:0007669"/>
    <property type="project" value="UniProtKB-UniRule"/>
</dbReference>
<dbReference type="CDD" id="cd00673">
    <property type="entry name" value="AlaRS_core"/>
    <property type="match status" value="1"/>
</dbReference>
<dbReference type="FunFam" id="2.40.30.130:FF:000001">
    <property type="entry name" value="Alanine--tRNA ligase"/>
    <property type="match status" value="1"/>
</dbReference>
<dbReference type="FunFam" id="3.10.310.40:FF:000001">
    <property type="entry name" value="Alanine--tRNA ligase"/>
    <property type="match status" value="1"/>
</dbReference>
<dbReference type="FunFam" id="3.30.54.20:FF:000001">
    <property type="entry name" value="Alanine--tRNA ligase"/>
    <property type="match status" value="1"/>
</dbReference>
<dbReference type="FunFam" id="3.30.930.10:FF:000046">
    <property type="entry name" value="Alanine--tRNA ligase"/>
    <property type="match status" value="1"/>
</dbReference>
<dbReference type="FunFam" id="3.30.980.10:FF:000004">
    <property type="entry name" value="Alanine--tRNA ligase, cytoplasmic"/>
    <property type="match status" value="1"/>
</dbReference>
<dbReference type="Gene3D" id="2.40.30.130">
    <property type="match status" value="1"/>
</dbReference>
<dbReference type="Gene3D" id="3.10.310.40">
    <property type="match status" value="1"/>
</dbReference>
<dbReference type="Gene3D" id="3.30.54.20">
    <property type="match status" value="1"/>
</dbReference>
<dbReference type="Gene3D" id="6.10.250.550">
    <property type="match status" value="1"/>
</dbReference>
<dbReference type="Gene3D" id="3.30.930.10">
    <property type="entry name" value="Bira Bifunctional Protein, Domain 2"/>
    <property type="match status" value="1"/>
</dbReference>
<dbReference type="Gene3D" id="3.30.980.10">
    <property type="entry name" value="Threonyl-trna Synthetase, Chain A, domain 2"/>
    <property type="match status" value="1"/>
</dbReference>
<dbReference type="HAMAP" id="MF_00036_B">
    <property type="entry name" value="Ala_tRNA_synth_B"/>
    <property type="match status" value="1"/>
</dbReference>
<dbReference type="InterPro" id="IPR045864">
    <property type="entry name" value="aa-tRNA-synth_II/BPL/LPL"/>
</dbReference>
<dbReference type="InterPro" id="IPR002318">
    <property type="entry name" value="Ala-tRNA-lgiase_IIc"/>
</dbReference>
<dbReference type="InterPro" id="IPR018162">
    <property type="entry name" value="Ala-tRNA-ligase_IIc_anticod-bd"/>
</dbReference>
<dbReference type="InterPro" id="IPR018165">
    <property type="entry name" value="Ala-tRNA-synth_IIc_core"/>
</dbReference>
<dbReference type="InterPro" id="IPR018164">
    <property type="entry name" value="Ala-tRNA-synth_IIc_N"/>
</dbReference>
<dbReference type="InterPro" id="IPR050058">
    <property type="entry name" value="Ala-tRNA_ligase"/>
</dbReference>
<dbReference type="InterPro" id="IPR023033">
    <property type="entry name" value="Ala_tRNA_ligase_euk/bac"/>
</dbReference>
<dbReference type="InterPro" id="IPR003156">
    <property type="entry name" value="DHHA1_dom"/>
</dbReference>
<dbReference type="InterPro" id="IPR018163">
    <property type="entry name" value="Thr/Ala-tRNA-synth_IIc_edit"/>
</dbReference>
<dbReference type="InterPro" id="IPR009000">
    <property type="entry name" value="Transl_B-barrel_sf"/>
</dbReference>
<dbReference type="InterPro" id="IPR012947">
    <property type="entry name" value="tRNA_SAD"/>
</dbReference>
<dbReference type="NCBIfam" id="TIGR00344">
    <property type="entry name" value="alaS"/>
    <property type="match status" value="1"/>
</dbReference>
<dbReference type="PANTHER" id="PTHR11777:SF9">
    <property type="entry name" value="ALANINE--TRNA LIGASE, CYTOPLASMIC"/>
    <property type="match status" value="1"/>
</dbReference>
<dbReference type="PANTHER" id="PTHR11777">
    <property type="entry name" value="ALANYL-TRNA SYNTHETASE"/>
    <property type="match status" value="1"/>
</dbReference>
<dbReference type="Pfam" id="PF02272">
    <property type="entry name" value="DHHA1"/>
    <property type="match status" value="1"/>
</dbReference>
<dbReference type="Pfam" id="PF01411">
    <property type="entry name" value="tRNA-synt_2c"/>
    <property type="match status" value="1"/>
</dbReference>
<dbReference type="Pfam" id="PF07973">
    <property type="entry name" value="tRNA_SAD"/>
    <property type="match status" value="1"/>
</dbReference>
<dbReference type="PRINTS" id="PR00980">
    <property type="entry name" value="TRNASYNTHALA"/>
</dbReference>
<dbReference type="SMART" id="SM00863">
    <property type="entry name" value="tRNA_SAD"/>
    <property type="match status" value="1"/>
</dbReference>
<dbReference type="SUPFAM" id="SSF55681">
    <property type="entry name" value="Class II aaRS and biotin synthetases"/>
    <property type="match status" value="1"/>
</dbReference>
<dbReference type="SUPFAM" id="SSF101353">
    <property type="entry name" value="Putative anticodon-binding domain of alanyl-tRNA synthetase (AlaRS)"/>
    <property type="match status" value="1"/>
</dbReference>
<dbReference type="SUPFAM" id="SSF55186">
    <property type="entry name" value="ThrRS/AlaRS common domain"/>
    <property type="match status" value="1"/>
</dbReference>
<dbReference type="SUPFAM" id="SSF50447">
    <property type="entry name" value="Translation proteins"/>
    <property type="match status" value="1"/>
</dbReference>
<dbReference type="PROSITE" id="PS50860">
    <property type="entry name" value="AA_TRNA_LIGASE_II_ALA"/>
    <property type="match status" value="1"/>
</dbReference>
<keyword id="KW-0030">Aminoacyl-tRNA synthetase</keyword>
<keyword id="KW-0067">ATP-binding</keyword>
<keyword id="KW-0963">Cytoplasm</keyword>
<keyword id="KW-0436">Ligase</keyword>
<keyword id="KW-0479">Metal-binding</keyword>
<keyword id="KW-0547">Nucleotide-binding</keyword>
<keyword id="KW-0648">Protein biosynthesis</keyword>
<keyword id="KW-1185">Reference proteome</keyword>
<keyword id="KW-0694">RNA-binding</keyword>
<keyword id="KW-0820">tRNA-binding</keyword>
<keyword id="KW-0862">Zinc</keyword>